<accession>B4TSF1</accession>
<proteinExistence type="inferred from homology"/>
<feature type="chain" id="PRO_1000098687" description="tRNA dimethylallyltransferase">
    <location>
        <begin position="1"/>
        <end position="316"/>
    </location>
</feature>
<feature type="region of interest" description="Interaction with substrate tRNA" evidence="1">
    <location>
        <begin position="42"/>
        <end position="45"/>
    </location>
</feature>
<feature type="region of interest" description="Interaction with substrate tRNA" evidence="1">
    <location>
        <begin position="166"/>
        <end position="170"/>
    </location>
</feature>
<feature type="region of interest" description="Interaction with substrate tRNA" evidence="1">
    <location>
        <begin position="247"/>
        <end position="252"/>
    </location>
</feature>
<feature type="binding site" evidence="1">
    <location>
        <begin position="17"/>
        <end position="24"/>
    </location>
    <ligand>
        <name>ATP</name>
        <dbReference type="ChEBI" id="CHEBI:30616"/>
    </ligand>
</feature>
<feature type="binding site" evidence="1">
    <location>
        <begin position="19"/>
        <end position="24"/>
    </location>
    <ligand>
        <name>substrate</name>
    </ligand>
</feature>
<feature type="site" description="Interaction with substrate tRNA" evidence="1">
    <location>
        <position position="108"/>
    </location>
</feature>
<feature type="site" description="Interaction with substrate tRNA" evidence="1">
    <location>
        <position position="130"/>
    </location>
</feature>
<gene>
    <name evidence="1" type="primary">miaA</name>
    <name type="ordered locus">SeSA_A4628</name>
</gene>
<evidence type="ECO:0000255" key="1">
    <source>
        <dbReference type="HAMAP-Rule" id="MF_00185"/>
    </source>
</evidence>
<organism>
    <name type="scientific">Salmonella schwarzengrund (strain CVM19633)</name>
    <dbReference type="NCBI Taxonomy" id="439843"/>
    <lineage>
        <taxon>Bacteria</taxon>
        <taxon>Pseudomonadati</taxon>
        <taxon>Pseudomonadota</taxon>
        <taxon>Gammaproteobacteria</taxon>
        <taxon>Enterobacterales</taxon>
        <taxon>Enterobacteriaceae</taxon>
        <taxon>Salmonella</taxon>
    </lineage>
</organism>
<name>MIAA_SALSV</name>
<keyword id="KW-0067">ATP-binding</keyword>
<keyword id="KW-0460">Magnesium</keyword>
<keyword id="KW-0547">Nucleotide-binding</keyword>
<keyword id="KW-0808">Transferase</keyword>
<keyword id="KW-0819">tRNA processing</keyword>
<reference key="1">
    <citation type="journal article" date="2011" name="J. Bacteriol.">
        <title>Comparative genomics of 28 Salmonella enterica isolates: evidence for CRISPR-mediated adaptive sublineage evolution.</title>
        <authorList>
            <person name="Fricke W.F."/>
            <person name="Mammel M.K."/>
            <person name="McDermott P.F."/>
            <person name="Tartera C."/>
            <person name="White D.G."/>
            <person name="Leclerc J.E."/>
            <person name="Ravel J."/>
            <person name="Cebula T.A."/>
        </authorList>
    </citation>
    <scope>NUCLEOTIDE SEQUENCE [LARGE SCALE GENOMIC DNA]</scope>
    <source>
        <strain>CVM19633</strain>
    </source>
</reference>
<protein>
    <recommendedName>
        <fullName evidence="1">tRNA dimethylallyltransferase</fullName>
        <ecNumber evidence="1">2.5.1.75</ecNumber>
    </recommendedName>
    <alternativeName>
        <fullName evidence="1">Dimethylallyl diphosphate:tRNA dimethylallyltransferase</fullName>
        <shortName evidence="1">DMAPP:tRNA dimethylallyltransferase</shortName>
        <shortName evidence="1">DMATase</shortName>
    </alternativeName>
    <alternativeName>
        <fullName evidence="1">Isopentenyl-diphosphate:tRNA isopentenyltransferase</fullName>
        <shortName evidence="1">IPP transferase</shortName>
        <shortName evidence="1">IPPT</shortName>
        <shortName evidence="1">IPTase</shortName>
    </alternativeName>
</protein>
<sequence>MNDVSKASLPKAIFLMGPTASGKTALAIELRKVLPVELISVDSALIYRGMDIGTAKPNADELKAAPHRLLDIRDPSQAYSAADFRRDALAQMAEITAAGRIPLLVGGTMLYFKALLEGLSPLPSADPEVRSRIEQQAAELGWEALHQQLQEIDPVAAARIHPNDPQRLSRALEVFFISGKTLTELTQTSGDALPYQVHQFAIAPASRELLHQRIELRFHQMLASGFEAEVRALFARGDLHTDLPSIRCVGYRQMWSYIEGEISYDEMVYRGVCATRQLAKRQMTWLRGWEGVRWLDSENPDRARKEVLQVVGAIAD</sequence>
<comment type="function">
    <text evidence="1">Catalyzes the transfer of a dimethylallyl group onto the adenine at position 37 in tRNAs that read codons beginning with uridine, leading to the formation of N6-(dimethylallyl)adenosine (i(6)A).</text>
</comment>
<comment type="catalytic activity">
    <reaction evidence="1">
        <text>adenosine(37) in tRNA + dimethylallyl diphosphate = N(6)-dimethylallyladenosine(37) in tRNA + diphosphate</text>
        <dbReference type="Rhea" id="RHEA:26482"/>
        <dbReference type="Rhea" id="RHEA-COMP:10162"/>
        <dbReference type="Rhea" id="RHEA-COMP:10375"/>
        <dbReference type="ChEBI" id="CHEBI:33019"/>
        <dbReference type="ChEBI" id="CHEBI:57623"/>
        <dbReference type="ChEBI" id="CHEBI:74411"/>
        <dbReference type="ChEBI" id="CHEBI:74415"/>
        <dbReference type="EC" id="2.5.1.75"/>
    </reaction>
</comment>
<comment type="cofactor">
    <cofactor evidence="1">
        <name>Mg(2+)</name>
        <dbReference type="ChEBI" id="CHEBI:18420"/>
    </cofactor>
</comment>
<comment type="subunit">
    <text evidence="1">Monomer.</text>
</comment>
<comment type="similarity">
    <text evidence="1">Belongs to the IPP transferase family.</text>
</comment>
<dbReference type="EC" id="2.5.1.75" evidence="1"/>
<dbReference type="EMBL" id="CP001127">
    <property type="protein sequence ID" value="ACF91877.1"/>
    <property type="molecule type" value="Genomic_DNA"/>
</dbReference>
<dbReference type="RefSeq" id="WP_001000734.1">
    <property type="nucleotide sequence ID" value="NC_011094.1"/>
</dbReference>
<dbReference type="SMR" id="B4TSF1"/>
<dbReference type="KEGG" id="sew:SeSA_A4628"/>
<dbReference type="HOGENOM" id="CLU_032616_0_0_6"/>
<dbReference type="Proteomes" id="UP000001865">
    <property type="component" value="Chromosome"/>
</dbReference>
<dbReference type="GO" id="GO:0005524">
    <property type="term" value="F:ATP binding"/>
    <property type="evidence" value="ECO:0007669"/>
    <property type="project" value="UniProtKB-UniRule"/>
</dbReference>
<dbReference type="GO" id="GO:0052381">
    <property type="term" value="F:tRNA dimethylallyltransferase activity"/>
    <property type="evidence" value="ECO:0007669"/>
    <property type="project" value="UniProtKB-UniRule"/>
</dbReference>
<dbReference type="GO" id="GO:0006400">
    <property type="term" value="P:tRNA modification"/>
    <property type="evidence" value="ECO:0007669"/>
    <property type="project" value="TreeGrafter"/>
</dbReference>
<dbReference type="FunFam" id="1.10.20.140:FF:000001">
    <property type="entry name" value="tRNA dimethylallyltransferase"/>
    <property type="match status" value="1"/>
</dbReference>
<dbReference type="FunFam" id="1.10.287.890:FF:000001">
    <property type="entry name" value="tRNA dimethylallyltransferase"/>
    <property type="match status" value="1"/>
</dbReference>
<dbReference type="Gene3D" id="1.10.20.140">
    <property type="match status" value="1"/>
</dbReference>
<dbReference type="Gene3D" id="1.10.287.890">
    <property type="entry name" value="Crystal structure of tRNA isopentenylpyrophosphate transferase (bh2366) domain"/>
    <property type="match status" value="1"/>
</dbReference>
<dbReference type="Gene3D" id="3.40.50.300">
    <property type="entry name" value="P-loop containing nucleotide triphosphate hydrolases"/>
    <property type="match status" value="1"/>
</dbReference>
<dbReference type="HAMAP" id="MF_00185">
    <property type="entry name" value="IPP_trans"/>
    <property type="match status" value="1"/>
</dbReference>
<dbReference type="InterPro" id="IPR039657">
    <property type="entry name" value="Dimethylallyltransferase"/>
</dbReference>
<dbReference type="InterPro" id="IPR018022">
    <property type="entry name" value="IPT"/>
</dbReference>
<dbReference type="InterPro" id="IPR027417">
    <property type="entry name" value="P-loop_NTPase"/>
</dbReference>
<dbReference type="NCBIfam" id="TIGR00174">
    <property type="entry name" value="miaA"/>
    <property type="match status" value="1"/>
</dbReference>
<dbReference type="PANTHER" id="PTHR11088">
    <property type="entry name" value="TRNA DIMETHYLALLYLTRANSFERASE"/>
    <property type="match status" value="1"/>
</dbReference>
<dbReference type="PANTHER" id="PTHR11088:SF60">
    <property type="entry name" value="TRNA DIMETHYLALLYLTRANSFERASE"/>
    <property type="match status" value="1"/>
</dbReference>
<dbReference type="Pfam" id="PF01715">
    <property type="entry name" value="IPPT"/>
    <property type="match status" value="1"/>
</dbReference>
<dbReference type="SUPFAM" id="SSF52540">
    <property type="entry name" value="P-loop containing nucleoside triphosphate hydrolases"/>
    <property type="match status" value="1"/>
</dbReference>